<proteinExistence type="inferred from homology"/>
<keyword id="KW-0067">ATP-binding</keyword>
<keyword id="KW-0436">Ligase</keyword>
<keyword id="KW-0460">Magnesium</keyword>
<keyword id="KW-0479">Metal-binding</keyword>
<keyword id="KW-0520">NAD</keyword>
<keyword id="KW-0547">Nucleotide-binding</keyword>
<comment type="function">
    <text evidence="1">Catalyzes the ATP-dependent amidation of deamido-NAD to form NAD. Uses ammonia as a nitrogen source.</text>
</comment>
<comment type="catalytic activity">
    <reaction evidence="1">
        <text>deamido-NAD(+) + NH4(+) + ATP = AMP + diphosphate + NAD(+) + H(+)</text>
        <dbReference type="Rhea" id="RHEA:21188"/>
        <dbReference type="ChEBI" id="CHEBI:15378"/>
        <dbReference type="ChEBI" id="CHEBI:28938"/>
        <dbReference type="ChEBI" id="CHEBI:30616"/>
        <dbReference type="ChEBI" id="CHEBI:33019"/>
        <dbReference type="ChEBI" id="CHEBI:57540"/>
        <dbReference type="ChEBI" id="CHEBI:58437"/>
        <dbReference type="ChEBI" id="CHEBI:456215"/>
        <dbReference type="EC" id="6.3.1.5"/>
    </reaction>
</comment>
<comment type="pathway">
    <text evidence="1">Cofactor biosynthesis; NAD(+) biosynthesis; NAD(+) from deamido-NAD(+) (ammonia route): step 1/1.</text>
</comment>
<comment type="subunit">
    <text evidence="1">Homodimer.</text>
</comment>
<comment type="similarity">
    <text evidence="1">Belongs to the NAD synthetase family.</text>
</comment>
<protein>
    <recommendedName>
        <fullName evidence="1">NH(3)-dependent NAD(+) synthetase</fullName>
        <ecNumber evidence="1">6.3.1.5</ecNumber>
    </recommendedName>
</protein>
<reference key="1">
    <citation type="journal article" date="2006" name="Proc. Natl. Acad. Sci. U.S.A.">
        <title>The complete genome sequence of a chronic atrophic gastritis Helicobacter pylori strain: evolution during disease progression.</title>
        <authorList>
            <person name="Oh J.D."/>
            <person name="Kling-Baeckhed H."/>
            <person name="Giannakis M."/>
            <person name="Xu J."/>
            <person name="Fulton R.S."/>
            <person name="Fulton L.A."/>
            <person name="Cordum H.S."/>
            <person name="Wang C."/>
            <person name="Elliott G."/>
            <person name="Edwards J."/>
            <person name="Mardis E.R."/>
            <person name="Engstrand L.G."/>
            <person name="Gordon J.I."/>
        </authorList>
    </citation>
    <scope>NUCLEOTIDE SEQUENCE [LARGE SCALE GENOMIC DNA]</scope>
    <source>
        <strain>HPAG1</strain>
    </source>
</reference>
<name>NADE_HELPH</name>
<dbReference type="EC" id="6.3.1.5" evidence="1"/>
<dbReference type="EMBL" id="CP000241">
    <property type="protein sequence ID" value="ABF84400.1"/>
    <property type="molecule type" value="Genomic_DNA"/>
</dbReference>
<dbReference type="RefSeq" id="WP_001168295.1">
    <property type="nucleotide sequence ID" value="NC_008086.1"/>
</dbReference>
<dbReference type="SMR" id="Q1CUH2"/>
<dbReference type="KEGG" id="hpa:HPAG1_0333"/>
<dbReference type="HOGENOM" id="CLU_059327_1_2_7"/>
<dbReference type="UniPathway" id="UPA00253">
    <property type="reaction ID" value="UER00333"/>
</dbReference>
<dbReference type="GO" id="GO:0005737">
    <property type="term" value="C:cytoplasm"/>
    <property type="evidence" value="ECO:0007669"/>
    <property type="project" value="InterPro"/>
</dbReference>
<dbReference type="GO" id="GO:0005524">
    <property type="term" value="F:ATP binding"/>
    <property type="evidence" value="ECO:0007669"/>
    <property type="project" value="UniProtKB-UniRule"/>
</dbReference>
<dbReference type="GO" id="GO:0004359">
    <property type="term" value="F:glutaminase activity"/>
    <property type="evidence" value="ECO:0007669"/>
    <property type="project" value="InterPro"/>
</dbReference>
<dbReference type="GO" id="GO:0046872">
    <property type="term" value="F:metal ion binding"/>
    <property type="evidence" value="ECO:0007669"/>
    <property type="project" value="UniProtKB-KW"/>
</dbReference>
<dbReference type="GO" id="GO:0003952">
    <property type="term" value="F:NAD+ synthase (glutamine-hydrolyzing) activity"/>
    <property type="evidence" value="ECO:0007669"/>
    <property type="project" value="InterPro"/>
</dbReference>
<dbReference type="GO" id="GO:0008795">
    <property type="term" value="F:NAD+ synthase activity"/>
    <property type="evidence" value="ECO:0007669"/>
    <property type="project" value="UniProtKB-UniRule"/>
</dbReference>
<dbReference type="GO" id="GO:0009435">
    <property type="term" value="P:NAD biosynthetic process"/>
    <property type="evidence" value="ECO:0007669"/>
    <property type="project" value="UniProtKB-UniRule"/>
</dbReference>
<dbReference type="CDD" id="cd00553">
    <property type="entry name" value="NAD_synthase"/>
    <property type="match status" value="1"/>
</dbReference>
<dbReference type="FunFam" id="3.40.50.620:FF:000106">
    <property type="entry name" value="Glutamine-dependent NAD(+) synthetase"/>
    <property type="match status" value="1"/>
</dbReference>
<dbReference type="Gene3D" id="3.40.50.620">
    <property type="entry name" value="HUPs"/>
    <property type="match status" value="1"/>
</dbReference>
<dbReference type="HAMAP" id="MF_00193">
    <property type="entry name" value="NadE_ammonia_dep"/>
    <property type="match status" value="1"/>
</dbReference>
<dbReference type="InterPro" id="IPR022310">
    <property type="entry name" value="NAD/GMP_synthase"/>
</dbReference>
<dbReference type="InterPro" id="IPR003694">
    <property type="entry name" value="NAD_synthase"/>
</dbReference>
<dbReference type="InterPro" id="IPR022926">
    <property type="entry name" value="NH(3)-dep_NAD(+)_synth"/>
</dbReference>
<dbReference type="InterPro" id="IPR014729">
    <property type="entry name" value="Rossmann-like_a/b/a_fold"/>
</dbReference>
<dbReference type="NCBIfam" id="TIGR00552">
    <property type="entry name" value="nadE"/>
    <property type="match status" value="1"/>
</dbReference>
<dbReference type="NCBIfam" id="NF010587">
    <property type="entry name" value="PRK13980.1"/>
    <property type="match status" value="1"/>
</dbReference>
<dbReference type="PANTHER" id="PTHR23090:SF9">
    <property type="entry name" value="GLUTAMINE-DEPENDENT NAD(+) SYNTHETASE"/>
    <property type="match status" value="1"/>
</dbReference>
<dbReference type="PANTHER" id="PTHR23090">
    <property type="entry name" value="NH 3 /GLUTAMINE-DEPENDENT NAD + SYNTHETASE"/>
    <property type="match status" value="1"/>
</dbReference>
<dbReference type="Pfam" id="PF02540">
    <property type="entry name" value="NAD_synthase"/>
    <property type="match status" value="1"/>
</dbReference>
<dbReference type="SUPFAM" id="SSF52402">
    <property type="entry name" value="Adenine nucleotide alpha hydrolases-like"/>
    <property type="match status" value="1"/>
</dbReference>
<gene>
    <name evidence="1" type="primary">nadE</name>
    <name type="ordered locus">HPAG1_0333</name>
</gene>
<evidence type="ECO:0000255" key="1">
    <source>
        <dbReference type="HAMAP-Rule" id="MF_00193"/>
    </source>
</evidence>
<accession>Q1CUH2</accession>
<organism>
    <name type="scientific">Helicobacter pylori (strain HPAG1)</name>
    <dbReference type="NCBI Taxonomy" id="357544"/>
    <lineage>
        <taxon>Bacteria</taxon>
        <taxon>Pseudomonadati</taxon>
        <taxon>Campylobacterota</taxon>
        <taxon>Epsilonproteobacteria</taxon>
        <taxon>Campylobacterales</taxon>
        <taxon>Helicobacteraceae</taxon>
        <taxon>Helicobacter</taxon>
    </lineage>
</organism>
<sequence length="260" mass="29189">MQKDYQKLIVYLCDFLEKEVQKKGFKKVVYGLSGGLDSAVVGVLCQKVFKENAHALLMPSSASMPENKTDALSLCKKFSISYTEYSIAPYDAIFGSHFKDASLTRKGNFCARLRMAFLYDYSLKSDSLVIGTSNKSERMLGYGTLFGDLACAINPIGELFKTEVYELARRLNIPKKILNKPPSADLFVGQSDEKDLGYPYSVIDPLLKDIEALFKNKPIDTETLTQLGYDEILVKNITSRIQKNAFKLELPTIAQKFNPK</sequence>
<feature type="chain" id="PRO_1000077560" description="NH(3)-dependent NAD(+) synthetase">
    <location>
        <begin position="1"/>
        <end position="260"/>
    </location>
</feature>
<feature type="binding site" evidence="1">
    <location>
        <begin position="31"/>
        <end position="38"/>
    </location>
    <ligand>
        <name>ATP</name>
        <dbReference type="ChEBI" id="CHEBI:30616"/>
    </ligand>
</feature>
<feature type="binding site" evidence="1">
    <location>
        <position position="37"/>
    </location>
    <ligand>
        <name>Mg(2+)</name>
        <dbReference type="ChEBI" id="CHEBI:18420"/>
    </ligand>
</feature>
<feature type="binding site" evidence="1">
    <location>
        <position position="112"/>
    </location>
    <ligand>
        <name>deamido-NAD(+)</name>
        <dbReference type="ChEBI" id="CHEBI:58437"/>
    </ligand>
</feature>
<feature type="binding site" evidence="1">
    <location>
        <position position="132"/>
    </location>
    <ligand>
        <name>ATP</name>
        <dbReference type="ChEBI" id="CHEBI:30616"/>
    </ligand>
</feature>
<feature type="binding site" evidence="1">
    <location>
        <position position="137"/>
    </location>
    <ligand>
        <name>Mg(2+)</name>
        <dbReference type="ChEBI" id="CHEBI:18420"/>
    </ligand>
</feature>
<feature type="binding site" evidence="1">
    <location>
        <position position="161"/>
    </location>
    <ligand>
        <name>ATP</name>
        <dbReference type="ChEBI" id="CHEBI:30616"/>
    </ligand>
</feature>
<feature type="binding site" evidence="1">
    <location>
        <position position="183"/>
    </location>
    <ligand>
        <name>ATP</name>
        <dbReference type="ChEBI" id="CHEBI:30616"/>
    </ligand>
</feature>